<protein>
    <recommendedName>
        <fullName evidence="1">Dihydroorotate dehydrogenase (quinone)</fullName>
        <ecNumber evidence="1">1.3.5.2</ecNumber>
    </recommendedName>
    <alternativeName>
        <fullName evidence="1">DHOdehase</fullName>
        <shortName evidence="1">DHOD</shortName>
        <shortName evidence="1">DHODase</shortName>
    </alternativeName>
    <alternativeName>
        <fullName evidence="1">Dihydroorotate oxidase</fullName>
    </alternativeName>
</protein>
<dbReference type="EC" id="1.3.5.2" evidence="1"/>
<dbReference type="EMBL" id="CP000671">
    <property type="protein sequence ID" value="ABQ98312.1"/>
    <property type="molecule type" value="Genomic_DNA"/>
</dbReference>
<dbReference type="SMR" id="A5UC11"/>
<dbReference type="KEGG" id="hip:CGSHiEE_04585"/>
<dbReference type="HOGENOM" id="CLU_013640_2_0_6"/>
<dbReference type="UniPathway" id="UPA00070">
    <property type="reaction ID" value="UER00946"/>
</dbReference>
<dbReference type="GO" id="GO:0005737">
    <property type="term" value="C:cytoplasm"/>
    <property type="evidence" value="ECO:0007669"/>
    <property type="project" value="InterPro"/>
</dbReference>
<dbReference type="GO" id="GO:0005886">
    <property type="term" value="C:plasma membrane"/>
    <property type="evidence" value="ECO:0007669"/>
    <property type="project" value="UniProtKB-SubCell"/>
</dbReference>
<dbReference type="GO" id="GO:0106430">
    <property type="term" value="F:dihydroorotate dehydrogenase (quinone) activity"/>
    <property type="evidence" value="ECO:0007669"/>
    <property type="project" value="UniProtKB-EC"/>
</dbReference>
<dbReference type="GO" id="GO:0006207">
    <property type="term" value="P:'de novo' pyrimidine nucleobase biosynthetic process"/>
    <property type="evidence" value="ECO:0007669"/>
    <property type="project" value="InterPro"/>
</dbReference>
<dbReference type="GO" id="GO:0044205">
    <property type="term" value="P:'de novo' UMP biosynthetic process"/>
    <property type="evidence" value="ECO:0007669"/>
    <property type="project" value="UniProtKB-UniRule"/>
</dbReference>
<dbReference type="CDD" id="cd04738">
    <property type="entry name" value="DHOD_2_like"/>
    <property type="match status" value="1"/>
</dbReference>
<dbReference type="FunFam" id="3.20.20.70:FF:000028">
    <property type="entry name" value="Dihydroorotate dehydrogenase (quinone)"/>
    <property type="match status" value="1"/>
</dbReference>
<dbReference type="Gene3D" id="3.20.20.70">
    <property type="entry name" value="Aldolase class I"/>
    <property type="match status" value="1"/>
</dbReference>
<dbReference type="HAMAP" id="MF_00225">
    <property type="entry name" value="DHO_dh_type2"/>
    <property type="match status" value="1"/>
</dbReference>
<dbReference type="InterPro" id="IPR013785">
    <property type="entry name" value="Aldolase_TIM"/>
</dbReference>
<dbReference type="InterPro" id="IPR050074">
    <property type="entry name" value="DHO_dehydrogenase"/>
</dbReference>
<dbReference type="InterPro" id="IPR012135">
    <property type="entry name" value="Dihydroorotate_DH_1_2"/>
</dbReference>
<dbReference type="InterPro" id="IPR005719">
    <property type="entry name" value="Dihydroorotate_DH_2"/>
</dbReference>
<dbReference type="InterPro" id="IPR005720">
    <property type="entry name" value="Dihydroorotate_DH_cat"/>
</dbReference>
<dbReference type="InterPro" id="IPR001295">
    <property type="entry name" value="Dihydroorotate_DH_CS"/>
</dbReference>
<dbReference type="NCBIfam" id="NF003644">
    <property type="entry name" value="PRK05286.1-1"/>
    <property type="match status" value="1"/>
</dbReference>
<dbReference type="NCBIfam" id="NF003646">
    <property type="entry name" value="PRK05286.1-4"/>
    <property type="match status" value="1"/>
</dbReference>
<dbReference type="NCBIfam" id="NF003652">
    <property type="entry name" value="PRK05286.2-5"/>
    <property type="match status" value="1"/>
</dbReference>
<dbReference type="NCBIfam" id="TIGR01036">
    <property type="entry name" value="pyrD_sub2"/>
    <property type="match status" value="1"/>
</dbReference>
<dbReference type="PANTHER" id="PTHR48109:SF4">
    <property type="entry name" value="DIHYDROOROTATE DEHYDROGENASE (QUINONE), MITOCHONDRIAL"/>
    <property type="match status" value="1"/>
</dbReference>
<dbReference type="PANTHER" id="PTHR48109">
    <property type="entry name" value="DIHYDROOROTATE DEHYDROGENASE (QUINONE), MITOCHONDRIAL-RELATED"/>
    <property type="match status" value="1"/>
</dbReference>
<dbReference type="Pfam" id="PF01180">
    <property type="entry name" value="DHO_dh"/>
    <property type="match status" value="1"/>
</dbReference>
<dbReference type="PIRSF" id="PIRSF000164">
    <property type="entry name" value="DHO_oxidase"/>
    <property type="match status" value="1"/>
</dbReference>
<dbReference type="SUPFAM" id="SSF51395">
    <property type="entry name" value="FMN-linked oxidoreductases"/>
    <property type="match status" value="1"/>
</dbReference>
<dbReference type="PROSITE" id="PS00911">
    <property type="entry name" value="DHODEHASE_1"/>
    <property type="match status" value="1"/>
</dbReference>
<dbReference type="PROSITE" id="PS00912">
    <property type="entry name" value="DHODEHASE_2"/>
    <property type="match status" value="1"/>
</dbReference>
<evidence type="ECO:0000255" key="1">
    <source>
        <dbReference type="HAMAP-Rule" id="MF_00225"/>
    </source>
</evidence>
<feature type="chain" id="PRO_1000024176" description="Dihydroorotate dehydrogenase (quinone)">
    <location>
        <begin position="1"/>
        <end position="339"/>
    </location>
</feature>
<feature type="active site" description="Nucleophile" evidence="1">
    <location>
        <position position="177"/>
    </location>
</feature>
<feature type="binding site" evidence="1">
    <location>
        <begin position="64"/>
        <end position="68"/>
    </location>
    <ligand>
        <name>FMN</name>
        <dbReference type="ChEBI" id="CHEBI:58210"/>
    </ligand>
</feature>
<feature type="binding site" evidence="1">
    <location>
        <position position="68"/>
    </location>
    <ligand>
        <name>substrate</name>
    </ligand>
</feature>
<feature type="binding site" evidence="1">
    <location>
        <position position="88"/>
    </location>
    <ligand>
        <name>FMN</name>
        <dbReference type="ChEBI" id="CHEBI:58210"/>
    </ligand>
</feature>
<feature type="binding site" evidence="1">
    <location>
        <begin position="113"/>
        <end position="117"/>
    </location>
    <ligand>
        <name>substrate</name>
    </ligand>
</feature>
<feature type="binding site" evidence="1">
    <location>
        <position position="141"/>
    </location>
    <ligand>
        <name>FMN</name>
        <dbReference type="ChEBI" id="CHEBI:58210"/>
    </ligand>
</feature>
<feature type="binding site" evidence="1">
    <location>
        <position position="174"/>
    </location>
    <ligand>
        <name>FMN</name>
        <dbReference type="ChEBI" id="CHEBI:58210"/>
    </ligand>
</feature>
<feature type="binding site" evidence="1">
    <location>
        <position position="174"/>
    </location>
    <ligand>
        <name>substrate</name>
    </ligand>
</feature>
<feature type="binding site" evidence="1">
    <location>
        <position position="179"/>
    </location>
    <ligand>
        <name>substrate</name>
    </ligand>
</feature>
<feature type="binding site" evidence="1">
    <location>
        <position position="219"/>
    </location>
    <ligand>
        <name>FMN</name>
        <dbReference type="ChEBI" id="CHEBI:58210"/>
    </ligand>
</feature>
<feature type="binding site" evidence="1">
    <location>
        <position position="247"/>
    </location>
    <ligand>
        <name>FMN</name>
        <dbReference type="ChEBI" id="CHEBI:58210"/>
    </ligand>
</feature>
<feature type="binding site" evidence="1">
    <location>
        <begin position="248"/>
        <end position="249"/>
    </location>
    <ligand>
        <name>substrate</name>
    </ligand>
</feature>
<feature type="binding site" evidence="1">
    <location>
        <position position="270"/>
    </location>
    <ligand>
        <name>FMN</name>
        <dbReference type="ChEBI" id="CHEBI:58210"/>
    </ligand>
</feature>
<feature type="binding site" evidence="1">
    <location>
        <position position="299"/>
    </location>
    <ligand>
        <name>FMN</name>
        <dbReference type="ChEBI" id="CHEBI:58210"/>
    </ligand>
</feature>
<feature type="binding site" evidence="1">
    <location>
        <begin position="320"/>
        <end position="321"/>
    </location>
    <ligand>
        <name>FMN</name>
        <dbReference type="ChEBI" id="CHEBI:58210"/>
    </ligand>
</feature>
<sequence length="339" mass="37371">MYQLFRHGIFQMDAEKAHNFTIQCLKLAGNPLFKPILKSIIHAPKGFPKMVMGVNFPNPIGLAAGADKNGDAIDGFGALGFGFLELGTVTPVAQDGNAKPRQFRLIEAEGIINRNGFNNNGIDYLIENVKNARYKGVIGINIGKNKFTPLEQGKDDYIFCLNKAYNYAGYITVNISSPNTPDLRQLQYGDYFDDLLRSIKDRQTILANQYNKYVPIAVKIAPDLTESELVQIADTLVRHKMDGVIATNTTISRDTVMGMKNAEQQGGLSGKPLQHKSTEIIKRLHQELKGQIPIIGSGGIDGLQNAQEKIEAGAELLQVYSGLIYHGPKLVKELVKNIK</sequence>
<comment type="function">
    <text evidence="1">Catalyzes the conversion of dihydroorotate to orotate with quinone as electron acceptor.</text>
</comment>
<comment type="catalytic activity">
    <reaction evidence="1">
        <text>(S)-dihydroorotate + a quinone = orotate + a quinol</text>
        <dbReference type="Rhea" id="RHEA:30187"/>
        <dbReference type="ChEBI" id="CHEBI:24646"/>
        <dbReference type="ChEBI" id="CHEBI:30839"/>
        <dbReference type="ChEBI" id="CHEBI:30864"/>
        <dbReference type="ChEBI" id="CHEBI:132124"/>
        <dbReference type="EC" id="1.3.5.2"/>
    </reaction>
</comment>
<comment type="cofactor">
    <cofactor evidence="1">
        <name>FMN</name>
        <dbReference type="ChEBI" id="CHEBI:58210"/>
    </cofactor>
    <text evidence="1">Binds 1 FMN per subunit.</text>
</comment>
<comment type="pathway">
    <text evidence="1">Pyrimidine metabolism; UMP biosynthesis via de novo pathway; orotate from (S)-dihydroorotate (quinone route): step 1/1.</text>
</comment>
<comment type="subunit">
    <text evidence="1">Monomer.</text>
</comment>
<comment type="subcellular location">
    <subcellularLocation>
        <location evidence="1">Cell membrane</location>
        <topology evidence="1">Peripheral membrane protein</topology>
    </subcellularLocation>
</comment>
<comment type="similarity">
    <text evidence="1">Belongs to the dihydroorotate dehydrogenase family. Type 2 subfamily.</text>
</comment>
<proteinExistence type="inferred from homology"/>
<gene>
    <name evidence="1" type="primary">pyrD</name>
    <name type="ordered locus">CGSHiEE_04585</name>
</gene>
<organism>
    <name type="scientific">Haemophilus influenzae (strain PittEE)</name>
    <dbReference type="NCBI Taxonomy" id="374930"/>
    <lineage>
        <taxon>Bacteria</taxon>
        <taxon>Pseudomonadati</taxon>
        <taxon>Pseudomonadota</taxon>
        <taxon>Gammaproteobacteria</taxon>
        <taxon>Pasteurellales</taxon>
        <taxon>Pasteurellaceae</taxon>
        <taxon>Haemophilus</taxon>
    </lineage>
</organism>
<keyword id="KW-1003">Cell membrane</keyword>
<keyword id="KW-0285">Flavoprotein</keyword>
<keyword id="KW-0288">FMN</keyword>
<keyword id="KW-0472">Membrane</keyword>
<keyword id="KW-0560">Oxidoreductase</keyword>
<keyword id="KW-0665">Pyrimidine biosynthesis</keyword>
<reference key="1">
    <citation type="journal article" date="2007" name="Genome Biol.">
        <title>Characterization and modeling of the Haemophilus influenzae core and supragenomes based on the complete genomic sequences of Rd and 12 clinical nontypeable strains.</title>
        <authorList>
            <person name="Hogg J.S."/>
            <person name="Hu F.Z."/>
            <person name="Janto B."/>
            <person name="Boissy R."/>
            <person name="Hayes J."/>
            <person name="Keefe R."/>
            <person name="Post J.C."/>
            <person name="Ehrlich G.D."/>
        </authorList>
    </citation>
    <scope>NUCLEOTIDE SEQUENCE [LARGE SCALE GENOMIC DNA]</scope>
    <source>
        <strain>PittEE</strain>
    </source>
</reference>
<name>PYRD_HAEIE</name>
<accession>A5UC11</accession>